<name>PYRD_BAUCH</name>
<feature type="chain" id="PRO_1000024153" description="Dihydroorotate dehydrogenase (quinone)">
    <location>
        <begin position="1"/>
        <end position="336"/>
    </location>
</feature>
<feature type="active site" description="Nucleophile" evidence="1">
    <location>
        <position position="175"/>
    </location>
</feature>
<feature type="binding site" evidence="1">
    <location>
        <begin position="62"/>
        <end position="66"/>
    </location>
    <ligand>
        <name>FMN</name>
        <dbReference type="ChEBI" id="CHEBI:58210"/>
    </ligand>
</feature>
<feature type="binding site" evidence="1">
    <location>
        <position position="66"/>
    </location>
    <ligand>
        <name>substrate</name>
    </ligand>
</feature>
<feature type="binding site" evidence="1">
    <location>
        <position position="86"/>
    </location>
    <ligand>
        <name>FMN</name>
        <dbReference type="ChEBI" id="CHEBI:58210"/>
    </ligand>
</feature>
<feature type="binding site" evidence="1">
    <location>
        <begin position="111"/>
        <end position="115"/>
    </location>
    <ligand>
        <name>substrate</name>
    </ligand>
</feature>
<feature type="binding site" evidence="1">
    <location>
        <position position="139"/>
    </location>
    <ligand>
        <name>FMN</name>
        <dbReference type="ChEBI" id="CHEBI:58210"/>
    </ligand>
</feature>
<feature type="binding site" evidence="1">
    <location>
        <position position="172"/>
    </location>
    <ligand>
        <name>FMN</name>
        <dbReference type="ChEBI" id="CHEBI:58210"/>
    </ligand>
</feature>
<feature type="binding site" evidence="1">
    <location>
        <position position="172"/>
    </location>
    <ligand>
        <name>substrate</name>
    </ligand>
</feature>
<feature type="binding site" evidence="1">
    <location>
        <position position="177"/>
    </location>
    <ligand>
        <name>substrate</name>
    </ligand>
</feature>
<feature type="binding site" evidence="1">
    <location>
        <position position="217"/>
    </location>
    <ligand>
        <name>FMN</name>
        <dbReference type="ChEBI" id="CHEBI:58210"/>
    </ligand>
</feature>
<feature type="binding site" evidence="1">
    <location>
        <position position="245"/>
    </location>
    <ligand>
        <name>FMN</name>
        <dbReference type="ChEBI" id="CHEBI:58210"/>
    </ligand>
</feature>
<feature type="binding site" evidence="1">
    <location>
        <begin position="246"/>
        <end position="247"/>
    </location>
    <ligand>
        <name>substrate</name>
    </ligand>
</feature>
<feature type="binding site" evidence="1">
    <location>
        <position position="268"/>
    </location>
    <ligand>
        <name>FMN</name>
        <dbReference type="ChEBI" id="CHEBI:58210"/>
    </ligand>
</feature>
<feature type="binding site" evidence="1">
    <location>
        <position position="297"/>
    </location>
    <ligand>
        <name>FMN</name>
        <dbReference type="ChEBI" id="CHEBI:58210"/>
    </ligand>
</feature>
<feature type="binding site" evidence="1">
    <location>
        <begin position="318"/>
        <end position="319"/>
    </location>
    <ligand>
        <name>FMN</name>
        <dbReference type="ChEBI" id="CHEBI:58210"/>
    </ligand>
</feature>
<protein>
    <recommendedName>
        <fullName evidence="1">Dihydroorotate dehydrogenase (quinone)</fullName>
        <ecNumber evidence="1">1.3.5.2</ecNumber>
    </recommendedName>
    <alternativeName>
        <fullName evidence="1">DHOdehase</fullName>
        <shortName evidence="1">DHOD</shortName>
        <shortName evidence="1">DHODase</shortName>
    </alternativeName>
    <alternativeName>
        <fullName evidence="1">Dihydroorotate oxidase</fullName>
    </alternativeName>
</protein>
<accession>Q1LT62</accession>
<gene>
    <name evidence="1" type="primary">pyrD</name>
    <name type="ordered locus">BCI_0409</name>
</gene>
<comment type="function">
    <text evidence="1">Catalyzes the conversion of dihydroorotate to orotate with quinone as electron acceptor.</text>
</comment>
<comment type="catalytic activity">
    <reaction evidence="1">
        <text>(S)-dihydroorotate + a quinone = orotate + a quinol</text>
        <dbReference type="Rhea" id="RHEA:30187"/>
        <dbReference type="ChEBI" id="CHEBI:24646"/>
        <dbReference type="ChEBI" id="CHEBI:30839"/>
        <dbReference type="ChEBI" id="CHEBI:30864"/>
        <dbReference type="ChEBI" id="CHEBI:132124"/>
        <dbReference type="EC" id="1.3.5.2"/>
    </reaction>
</comment>
<comment type="cofactor">
    <cofactor evidence="1">
        <name>FMN</name>
        <dbReference type="ChEBI" id="CHEBI:58210"/>
    </cofactor>
    <text evidence="1">Binds 1 FMN per subunit.</text>
</comment>
<comment type="pathway">
    <text evidence="1">Pyrimidine metabolism; UMP biosynthesis via de novo pathway; orotate from (S)-dihydroorotate (quinone route): step 1/1.</text>
</comment>
<comment type="subunit">
    <text evidence="1">Monomer.</text>
</comment>
<comment type="subcellular location">
    <subcellularLocation>
        <location evidence="1">Cell membrane</location>
        <topology evidence="1">Peripheral membrane protein</topology>
    </subcellularLocation>
</comment>
<comment type="similarity">
    <text evidence="1">Belongs to the dihydroorotate dehydrogenase family. Type 2 subfamily.</text>
</comment>
<proteinExistence type="inferred from homology"/>
<evidence type="ECO:0000255" key="1">
    <source>
        <dbReference type="HAMAP-Rule" id="MF_00225"/>
    </source>
</evidence>
<dbReference type="EC" id="1.3.5.2" evidence="1"/>
<dbReference type="EMBL" id="CP000238">
    <property type="protein sequence ID" value="ABF14134.1"/>
    <property type="molecule type" value="Genomic_DNA"/>
</dbReference>
<dbReference type="RefSeq" id="WP_011520585.1">
    <property type="nucleotide sequence ID" value="NC_007984.1"/>
</dbReference>
<dbReference type="SMR" id="Q1LT62"/>
<dbReference type="STRING" id="374463.BCI_0409"/>
<dbReference type="KEGG" id="bci:BCI_0409"/>
<dbReference type="HOGENOM" id="CLU_013640_2_0_6"/>
<dbReference type="OrthoDB" id="9802377at2"/>
<dbReference type="UniPathway" id="UPA00070">
    <property type="reaction ID" value="UER00946"/>
</dbReference>
<dbReference type="Proteomes" id="UP000002427">
    <property type="component" value="Chromosome"/>
</dbReference>
<dbReference type="GO" id="GO:0005737">
    <property type="term" value="C:cytoplasm"/>
    <property type="evidence" value="ECO:0007669"/>
    <property type="project" value="InterPro"/>
</dbReference>
<dbReference type="GO" id="GO:0005886">
    <property type="term" value="C:plasma membrane"/>
    <property type="evidence" value="ECO:0007669"/>
    <property type="project" value="UniProtKB-SubCell"/>
</dbReference>
<dbReference type="GO" id="GO:0106430">
    <property type="term" value="F:dihydroorotate dehydrogenase (quinone) activity"/>
    <property type="evidence" value="ECO:0007669"/>
    <property type="project" value="UniProtKB-EC"/>
</dbReference>
<dbReference type="GO" id="GO:0006207">
    <property type="term" value="P:'de novo' pyrimidine nucleobase biosynthetic process"/>
    <property type="evidence" value="ECO:0007669"/>
    <property type="project" value="InterPro"/>
</dbReference>
<dbReference type="GO" id="GO:0044205">
    <property type="term" value="P:'de novo' UMP biosynthetic process"/>
    <property type="evidence" value="ECO:0007669"/>
    <property type="project" value="UniProtKB-UniRule"/>
</dbReference>
<dbReference type="CDD" id="cd04738">
    <property type="entry name" value="DHOD_2_like"/>
    <property type="match status" value="1"/>
</dbReference>
<dbReference type="FunFam" id="3.20.20.70:FF:000028">
    <property type="entry name" value="Dihydroorotate dehydrogenase (quinone)"/>
    <property type="match status" value="1"/>
</dbReference>
<dbReference type="Gene3D" id="3.20.20.70">
    <property type="entry name" value="Aldolase class I"/>
    <property type="match status" value="1"/>
</dbReference>
<dbReference type="HAMAP" id="MF_00225">
    <property type="entry name" value="DHO_dh_type2"/>
    <property type="match status" value="1"/>
</dbReference>
<dbReference type="InterPro" id="IPR013785">
    <property type="entry name" value="Aldolase_TIM"/>
</dbReference>
<dbReference type="InterPro" id="IPR050074">
    <property type="entry name" value="DHO_dehydrogenase"/>
</dbReference>
<dbReference type="InterPro" id="IPR012135">
    <property type="entry name" value="Dihydroorotate_DH_1_2"/>
</dbReference>
<dbReference type="InterPro" id="IPR005719">
    <property type="entry name" value="Dihydroorotate_DH_2"/>
</dbReference>
<dbReference type="InterPro" id="IPR005720">
    <property type="entry name" value="Dihydroorotate_DH_cat"/>
</dbReference>
<dbReference type="InterPro" id="IPR001295">
    <property type="entry name" value="Dihydroorotate_DH_CS"/>
</dbReference>
<dbReference type="NCBIfam" id="NF003644">
    <property type="entry name" value="PRK05286.1-1"/>
    <property type="match status" value="1"/>
</dbReference>
<dbReference type="NCBIfam" id="NF003645">
    <property type="entry name" value="PRK05286.1-2"/>
    <property type="match status" value="1"/>
</dbReference>
<dbReference type="NCBIfam" id="NF003646">
    <property type="entry name" value="PRK05286.1-4"/>
    <property type="match status" value="1"/>
</dbReference>
<dbReference type="NCBIfam" id="NF003652">
    <property type="entry name" value="PRK05286.2-5"/>
    <property type="match status" value="1"/>
</dbReference>
<dbReference type="NCBIfam" id="TIGR01036">
    <property type="entry name" value="pyrD_sub2"/>
    <property type="match status" value="1"/>
</dbReference>
<dbReference type="PANTHER" id="PTHR48109:SF4">
    <property type="entry name" value="DIHYDROOROTATE DEHYDROGENASE (QUINONE), MITOCHONDRIAL"/>
    <property type="match status" value="1"/>
</dbReference>
<dbReference type="PANTHER" id="PTHR48109">
    <property type="entry name" value="DIHYDROOROTATE DEHYDROGENASE (QUINONE), MITOCHONDRIAL-RELATED"/>
    <property type="match status" value="1"/>
</dbReference>
<dbReference type="Pfam" id="PF01180">
    <property type="entry name" value="DHO_dh"/>
    <property type="match status" value="1"/>
</dbReference>
<dbReference type="PIRSF" id="PIRSF000164">
    <property type="entry name" value="DHO_oxidase"/>
    <property type="match status" value="1"/>
</dbReference>
<dbReference type="SUPFAM" id="SSF51395">
    <property type="entry name" value="FMN-linked oxidoreductases"/>
    <property type="match status" value="1"/>
</dbReference>
<dbReference type="PROSITE" id="PS00911">
    <property type="entry name" value="DHODEHASE_1"/>
    <property type="match status" value="1"/>
</dbReference>
<dbReference type="PROSITE" id="PS00912">
    <property type="entry name" value="DHODEHASE_2"/>
    <property type="match status" value="1"/>
</dbReference>
<sequence length="336" mass="36873">MLYPLIRQFLFQLDPEKAHELTIQQLKRIAGTPLEYLVRQSVPTKAVTCMGIAFKNPLGLAAGLDKNGECIDALGAMGFGFIEVGTVTPHAQIGNEKPRLFRLTKAYGLINRMGFNNKGVDNLVNNIQKSHFGGVLGINIGKNKDTPIEQGKDDYLICMEKVYPYANYIAVNISSPNTPQLTTLQSGEILDDLLRAIKDKQAKLQEYHHKYVPIAVKITPDMTESELIQMADLLVQHKIDGIIATNTTTSRELVHGLDHSSQSGGLSGRPLQLMSTEVIRILSSKLQGKLPIIGVGGIDSLISAREKMAAGATLIQIYSSFIFHGPRLIKDIISDL</sequence>
<keyword id="KW-1003">Cell membrane</keyword>
<keyword id="KW-0285">Flavoprotein</keyword>
<keyword id="KW-0288">FMN</keyword>
<keyword id="KW-0472">Membrane</keyword>
<keyword id="KW-0560">Oxidoreductase</keyword>
<keyword id="KW-0665">Pyrimidine biosynthesis</keyword>
<keyword id="KW-1185">Reference proteome</keyword>
<reference key="1">
    <citation type="journal article" date="2006" name="PLoS Biol.">
        <title>Metabolic complementarity and genomics of the dual bacterial symbiosis of sharpshooters.</title>
        <authorList>
            <person name="Wu D."/>
            <person name="Daugherty S.C."/>
            <person name="Van Aken S.E."/>
            <person name="Pai G.H."/>
            <person name="Watkins K.L."/>
            <person name="Khouri H."/>
            <person name="Tallon L.J."/>
            <person name="Zaborsky J.M."/>
            <person name="Dunbar H.E."/>
            <person name="Tran P.L."/>
            <person name="Moran N.A."/>
            <person name="Eisen J.A."/>
        </authorList>
    </citation>
    <scope>NUCLEOTIDE SEQUENCE [LARGE SCALE GENOMIC DNA]</scope>
</reference>
<organism>
    <name type="scientific">Baumannia cicadellinicola subsp. Homalodisca coagulata</name>
    <dbReference type="NCBI Taxonomy" id="374463"/>
    <lineage>
        <taxon>Bacteria</taxon>
        <taxon>Pseudomonadati</taxon>
        <taxon>Pseudomonadota</taxon>
        <taxon>Gammaproteobacteria</taxon>
        <taxon>Candidatus Palibaumannia</taxon>
    </lineage>
</organism>